<evidence type="ECO:0000255" key="1">
    <source>
        <dbReference type="HAMAP-Rule" id="MF_02006"/>
    </source>
</evidence>
<comment type="function">
    <text evidence="1">Catalyzes the attachment of tyrosine to tRNA(Tyr) in a two-step reaction: tyrosine is first activated by ATP to form Tyr-AMP and then transferred to the acceptor end of tRNA(Tyr).</text>
</comment>
<comment type="catalytic activity">
    <reaction evidence="1">
        <text>tRNA(Tyr) + L-tyrosine + ATP = L-tyrosyl-tRNA(Tyr) + AMP + diphosphate + H(+)</text>
        <dbReference type="Rhea" id="RHEA:10220"/>
        <dbReference type="Rhea" id="RHEA-COMP:9706"/>
        <dbReference type="Rhea" id="RHEA-COMP:9707"/>
        <dbReference type="ChEBI" id="CHEBI:15378"/>
        <dbReference type="ChEBI" id="CHEBI:30616"/>
        <dbReference type="ChEBI" id="CHEBI:33019"/>
        <dbReference type="ChEBI" id="CHEBI:58315"/>
        <dbReference type="ChEBI" id="CHEBI:78442"/>
        <dbReference type="ChEBI" id="CHEBI:78536"/>
        <dbReference type="ChEBI" id="CHEBI:456215"/>
        <dbReference type="EC" id="6.1.1.1"/>
    </reaction>
</comment>
<comment type="subunit">
    <text evidence="1">Homodimer.</text>
</comment>
<comment type="subcellular location">
    <subcellularLocation>
        <location evidence="1">Cytoplasm</location>
    </subcellularLocation>
</comment>
<comment type="similarity">
    <text evidence="1">Belongs to the class-I aminoacyl-tRNA synthetase family. TyrS type 1 subfamily.</text>
</comment>
<accession>A8LQM0</accession>
<gene>
    <name evidence="1" type="primary">tyrS</name>
    <name type="ordered locus">Dshi_2151</name>
</gene>
<organism>
    <name type="scientific">Dinoroseobacter shibae (strain DSM 16493 / NCIMB 14021 / DFL 12)</name>
    <dbReference type="NCBI Taxonomy" id="398580"/>
    <lineage>
        <taxon>Bacteria</taxon>
        <taxon>Pseudomonadati</taxon>
        <taxon>Pseudomonadota</taxon>
        <taxon>Alphaproteobacteria</taxon>
        <taxon>Rhodobacterales</taxon>
        <taxon>Roseobacteraceae</taxon>
        <taxon>Dinoroseobacter</taxon>
    </lineage>
</organism>
<keyword id="KW-0030">Aminoacyl-tRNA synthetase</keyword>
<keyword id="KW-0067">ATP-binding</keyword>
<keyword id="KW-0963">Cytoplasm</keyword>
<keyword id="KW-0436">Ligase</keyword>
<keyword id="KW-0547">Nucleotide-binding</keyword>
<keyword id="KW-0648">Protein biosynthesis</keyword>
<keyword id="KW-1185">Reference proteome</keyword>
<keyword id="KW-0694">RNA-binding</keyword>
<dbReference type="EC" id="6.1.1.1" evidence="1"/>
<dbReference type="EMBL" id="CP000830">
    <property type="protein sequence ID" value="ABV93887.1"/>
    <property type="molecule type" value="Genomic_DNA"/>
</dbReference>
<dbReference type="RefSeq" id="WP_012178819.1">
    <property type="nucleotide sequence ID" value="NC_009952.1"/>
</dbReference>
<dbReference type="SMR" id="A8LQM0"/>
<dbReference type="STRING" id="398580.Dshi_2151"/>
<dbReference type="KEGG" id="dsh:Dshi_2151"/>
<dbReference type="eggNOG" id="COG0162">
    <property type="taxonomic scope" value="Bacteria"/>
</dbReference>
<dbReference type="HOGENOM" id="CLU_024003_0_3_5"/>
<dbReference type="OrthoDB" id="9804243at2"/>
<dbReference type="Proteomes" id="UP000006833">
    <property type="component" value="Chromosome"/>
</dbReference>
<dbReference type="GO" id="GO:0005829">
    <property type="term" value="C:cytosol"/>
    <property type="evidence" value="ECO:0007669"/>
    <property type="project" value="TreeGrafter"/>
</dbReference>
<dbReference type="GO" id="GO:0005524">
    <property type="term" value="F:ATP binding"/>
    <property type="evidence" value="ECO:0007669"/>
    <property type="project" value="UniProtKB-UniRule"/>
</dbReference>
<dbReference type="GO" id="GO:0003723">
    <property type="term" value="F:RNA binding"/>
    <property type="evidence" value="ECO:0007669"/>
    <property type="project" value="UniProtKB-KW"/>
</dbReference>
<dbReference type="GO" id="GO:0004831">
    <property type="term" value="F:tyrosine-tRNA ligase activity"/>
    <property type="evidence" value="ECO:0007669"/>
    <property type="project" value="UniProtKB-UniRule"/>
</dbReference>
<dbReference type="GO" id="GO:0006437">
    <property type="term" value="P:tyrosyl-tRNA aminoacylation"/>
    <property type="evidence" value="ECO:0007669"/>
    <property type="project" value="UniProtKB-UniRule"/>
</dbReference>
<dbReference type="CDD" id="cd00805">
    <property type="entry name" value="TyrRS_core"/>
    <property type="match status" value="1"/>
</dbReference>
<dbReference type="FunFam" id="1.10.240.10:FF:000001">
    <property type="entry name" value="Tyrosine--tRNA ligase"/>
    <property type="match status" value="1"/>
</dbReference>
<dbReference type="FunFam" id="3.40.50.620:FF:000008">
    <property type="entry name" value="Tyrosine--tRNA ligase"/>
    <property type="match status" value="1"/>
</dbReference>
<dbReference type="Gene3D" id="3.40.50.620">
    <property type="entry name" value="HUPs"/>
    <property type="match status" value="1"/>
</dbReference>
<dbReference type="Gene3D" id="3.10.290.10">
    <property type="entry name" value="RNA-binding S4 domain"/>
    <property type="match status" value="1"/>
</dbReference>
<dbReference type="Gene3D" id="1.10.240.10">
    <property type="entry name" value="Tyrosyl-Transfer RNA Synthetase"/>
    <property type="match status" value="1"/>
</dbReference>
<dbReference type="HAMAP" id="MF_02006">
    <property type="entry name" value="Tyr_tRNA_synth_type1"/>
    <property type="match status" value="1"/>
</dbReference>
<dbReference type="InterPro" id="IPR002305">
    <property type="entry name" value="aa-tRNA-synth_Ic"/>
</dbReference>
<dbReference type="InterPro" id="IPR014729">
    <property type="entry name" value="Rossmann-like_a/b/a_fold"/>
</dbReference>
<dbReference type="InterPro" id="IPR036986">
    <property type="entry name" value="S4_RNA-bd_sf"/>
</dbReference>
<dbReference type="InterPro" id="IPR002307">
    <property type="entry name" value="Tyr-tRNA-ligase"/>
</dbReference>
<dbReference type="InterPro" id="IPR024088">
    <property type="entry name" value="Tyr-tRNA-ligase_bac-type"/>
</dbReference>
<dbReference type="InterPro" id="IPR024107">
    <property type="entry name" value="Tyr-tRNA-ligase_bac_1"/>
</dbReference>
<dbReference type="NCBIfam" id="TIGR00234">
    <property type="entry name" value="tyrS"/>
    <property type="match status" value="1"/>
</dbReference>
<dbReference type="PANTHER" id="PTHR11766:SF0">
    <property type="entry name" value="TYROSINE--TRNA LIGASE, MITOCHONDRIAL"/>
    <property type="match status" value="1"/>
</dbReference>
<dbReference type="PANTHER" id="PTHR11766">
    <property type="entry name" value="TYROSYL-TRNA SYNTHETASE"/>
    <property type="match status" value="1"/>
</dbReference>
<dbReference type="Pfam" id="PF00579">
    <property type="entry name" value="tRNA-synt_1b"/>
    <property type="match status" value="1"/>
</dbReference>
<dbReference type="PRINTS" id="PR01040">
    <property type="entry name" value="TRNASYNTHTYR"/>
</dbReference>
<dbReference type="SUPFAM" id="SSF55174">
    <property type="entry name" value="Alpha-L RNA-binding motif"/>
    <property type="match status" value="1"/>
</dbReference>
<dbReference type="SUPFAM" id="SSF52374">
    <property type="entry name" value="Nucleotidylyl transferase"/>
    <property type="match status" value="1"/>
</dbReference>
<dbReference type="PROSITE" id="PS50889">
    <property type="entry name" value="S4"/>
    <property type="match status" value="1"/>
</dbReference>
<feature type="chain" id="PRO_1000088584" description="Tyrosine--tRNA ligase">
    <location>
        <begin position="1"/>
        <end position="417"/>
    </location>
</feature>
<feature type="domain" description="S4 RNA-binding" evidence="1">
    <location>
        <begin position="351"/>
        <end position="414"/>
    </location>
</feature>
<feature type="short sequence motif" description="'HIGH' region">
    <location>
        <begin position="45"/>
        <end position="54"/>
    </location>
</feature>
<feature type="short sequence motif" description="'KMSKS' region">
    <location>
        <begin position="237"/>
        <end position="241"/>
    </location>
</feature>
<feature type="binding site" evidence="1">
    <location>
        <position position="40"/>
    </location>
    <ligand>
        <name>L-tyrosine</name>
        <dbReference type="ChEBI" id="CHEBI:58315"/>
    </ligand>
</feature>
<feature type="binding site" evidence="1">
    <location>
        <position position="177"/>
    </location>
    <ligand>
        <name>L-tyrosine</name>
        <dbReference type="ChEBI" id="CHEBI:58315"/>
    </ligand>
</feature>
<feature type="binding site" evidence="1">
    <location>
        <position position="181"/>
    </location>
    <ligand>
        <name>L-tyrosine</name>
        <dbReference type="ChEBI" id="CHEBI:58315"/>
    </ligand>
</feature>
<feature type="binding site" evidence="1">
    <location>
        <position position="240"/>
    </location>
    <ligand>
        <name>ATP</name>
        <dbReference type="ChEBI" id="CHEBI:30616"/>
    </ligand>
</feature>
<name>SYY_DINSH</name>
<sequence length="417" mass="46029">MTYQPKSDFMRVMMERGFLADCTDYQGLDEAMSKGVVPTYIGYDATAASLHVGHLLNIMMLRWLQKTGHKPITLMGGGTTKVGDPSFRSDERPLLGAEQIDANIAGMKQVFSSYLTYGDGPTDALMLNNAEWLDGLNYLEFLRDVGRHFSVNRMLSFESVKSRLDREQSLSFLEFNYMILQAYDFMELNRRYGCRLQMGGSDQWGNIVNGIDLTRRILDQEVYGLTSPLLTTSDGRKMGKSQGGAIWLNGDMLSPYEFWQFWRNTTDADVGRFLKLYTELPLEECDRLGALAGSEINDAKIILANAVTALLHGPEAAQAAEATAREVFEKGGAGEDLPTLTLTTDEIGDGISVVQLITRSGLAKSGKEAKRLIAENGAKLDDAPLTDAGLMIDADRLAAPIKLSAGRKRHALIKRAD</sequence>
<protein>
    <recommendedName>
        <fullName evidence="1">Tyrosine--tRNA ligase</fullName>
        <ecNumber evidence="1">6.1.1.1</ecNumber>
    </recommendedName>
    <alternativeName>
        <fullName evidence="1">Tyrosyl-tRNA synthetase</fullName>
        <shortName evidence="1">TyrRS</shortName>
    </alternativeName>
</protein>
<reference key="1">
    <citation type="journal article" date="2010" name="ISME J.">
        <title>The complete genome sequence of the algal symbiont Dinoroseobacter shibae: a hitchhiker's guide to life in the sea.</title>
        <authorList>
            <person name="Wagner-Dobler I."/>
            <person name="Ballhausen B."/>
            <person name="Berger M."/>
            <person name="Brinkhoff T."/>
            <person name="Buchholz I."/>
            <person name="Bunk B."/>
            <person name="Cypionka H."/>
            <person name="Daniel R."/>
            <person name="Drepper T."/>
            <person name="Gerdts G."/>
            <person name="Hahnke S."/>
            <person name="Han C."/>
            <person name="Jahn D."/>
            <person name="Kalhoefer D."/>
            <person name="Kiss H."/>
            <person name="Klenk H.P."/>
            <person name="Kyrpides N."/>
            <person name="Liebl W."/>
            <person name="Liesegang H."/>
            <person name="Meincke L."/>
            <person name="Pati A."/>
            <person name="Petersen J."/>
            <person name="Piekarski T."/>
            <person name="Pommerenke C."/>
            <person name="Pradella S."/>
            <person name="Pukall R."/>
            <person name="Rabus R."/>
            <person name="Stackebrandt E."/>
            <person name="Thole S."/>
            <person name="Thompson L."/>
            <person name="Tielen P."/>
            <person name="Tomasch J."/>
            <person name="von Jan M."/>
            <person name="Wanphrut N."/>
            <person name="Wichels A."/>
            <person name="Zech H."/>
            <person name="Simon M."/>
        </authorList>
    </citation>
    <scope>NUCLEOTIDE SEQUENCE [LARGE SCALE GENOMIC DNA]</scope>
    <source>
        <strain>DSM 16493 / NCIMB 14021 / DFL 12</strain>
    </source>
</reference>
<proteinExistence type="inferred from homology"/>